<organism>
    <name type="scientific">Xylella fastidiosa (strain 9a5c)</name>
    <dbReference type="NCBI Taxonomy" id="160492"/>
    <lineage>
        <taxon>Bacteria</taxon>
        <taxon>Pseudomonadati</taxon>
        <taxon>Pseudomonadota</taxon>
        <taxon>Gammaproteobacteria</taxon>
        <taxon>Lysobacterales</taxon>
        <taxon>Lysobacteraceae</taxon>
        <taxon>Xylella</taxon>
    </lineage>
</organism>
<protein>
    <recommendedName>
        <fullName evidence="1">Uridylate kinase</fullName>
        <shortName evidence="1">UK</shortName>
        <ecNumber evidence="1">2.7.4.22</ecNumber>
    </recommendedName>
    <alternativeName>
        <fullName evidence="1">Uridine monophosphate kinase</fullName>
        <shortName evidence="1">UMP kinase</shortName>
        <shortName evidence="1">UMPK</shortName>
    </alternativeName>
</protein>
<gene>
    <name evidence="1" type="primary">pyrH</name>
    <name type="ordered locus">XF_1058</name>
</gene>
<evidence type="ECO:0000255" key="1">
    <source>
        <dbReference type="HAMAP-Rule" id="MF_01220"/>
    </source>
</evidence>
<feature type="chain" id="PRO_0000143909" description="Uridylate kinase">
    <location>
        <begin position="1"/>
        <end position="247"/>
    </location>
</feature>
<feature type="binding site" evidence="1">
    <location>
        <begin position="16"/>
        <end position="19"/>
    </location>
    <ligand>
        <name>ATP</name>
        <dbReference type="ChEBI" id="CHEBI:30616"/>
    </ligand>
</feature>
<feature type="binding site" evidence="1">
    <location>
        <position position="58"/>
    </location>
    <ligand>
        <name>UMP</name>
        <dbReference type="ChEBI" id="CHEBI:57865"/>
    </ligand>
</feature>
<feature type="binding site" evidence="1">
    <location>
        <position position="59"/>
    </location>
    <ligand>
        <name>ATP</name>
        <dbReference type="ChEBI" id="CHEBI:30616"/>
    </ligand>
</feature>
<feature type="binding site" evidence="1">
    <location>
        <position position="63"/>
    </location>
    <ligand>
        <name>ATP</name>
        <dbReference type="ChEBI" id="CHEBI:30616"/>
    </ligand>
</feature>
<feature type="binding site" evidence="1">
    <location>
        <position position="78"/>
    </location>
    <ligand>
        <name>UMP</name>
        <dbReference type="ChEBI" id="CHEBI:57865"/>
    </ligand>
</feature>
<feature type="binding site" evidence="1">
    <location>
        <begin position="139"/>
        <end position="146"/>
    </location>
    <ligand>
        <name>UMP</name>
        <dbReference type="ChEBI" id="CHEBI:57865"/>
    </ligand>
</feature>
<feature type="binding site" evidence="1">
    <location>
        <position position="166"/>
    </location>
    <ligand>
        <name>ATP</name>
        <dbReference type="ChEBI" id="CHEBI:30616"/>
    </ligand>
</feature>
<feature type="binding site" evidence="1">
    <location>
        <position position="172"/>
    </location>
    <ligand>
        <name>ATP</name>
        <dbReference type="ChEBI" id="CHEBI:30616"/>
    </ligand>
</feature>
<feature type="binding site" evidence="1">
    <location>
        <position position="175"/>
    </location>
    <ligand>
        <name>ATP</name>
        <dbReference type="ChEBI" id="CHEBI:30616"/>
    </ligand>
</feature>
<reference key="1">
    <citation type="journal article" date="2000" name="Nature">
        <title>The genome sequence of the plant pathogen Xylella fastidiosa.</title>
        <authorList>
            <person name="Simpson A.J.G."/>
            <person name="Reinach F.C."/>
            <person name="Arruda P."/>
            <person name="Abreu F.A."/>
            <person name="Acencio M."/>
            <person name="Alvarenga R."/>
            <person name="Alves L.M.C."/>
            <person name="Araya J.E."/>
            <person name="Baia G.S."/>
            <person name="Baptista C.S."/>
            <person name="Barros M.H."/>
            <person name="Bonaccorsi E.D."/>
            <person name="Bordin S."/>
            <person name="Bove J.M."/>
            <person name="Briones M.R.S."/>
            <person name="Bueno M.R.P."/>
            <person name="Camargo A.A."/>
            <person name="Camargo L.E.A."/>
            <person name="Carraro D.M."/>
            <person name="Carrer H."/>
            <person name="Colauto N.B."/>
            <person name="Colombo C."/>
            <person name="Costa F.F."/>
            <person name="Costa M.C.R."/>
            <person name="Costa-Neto C.M."/>
            <person name="Coutinho L.L."/>
            <person name="Cristofani M."/>
            <person name="Dias-Neto E."/>
            <person name="Docena C."/>
            <person name="El-Dorry H."/>
            <person name="Facincani A.P."/>
            <person name="Ferreira A.J.S."/>
            <person name="Ferreira V.C.A."/>
            <person name="Ferro J.A."/>
            <person name="Fraga J.S."/>
            <person name="Franca S.C."/>
            <person name="Franco M.C."/>
            <person name="Frohme M."/>
            <person name="Furlan L.R."/>
            <person name="Garnier M."/>
            <person name="Goldman G.H."/>
            <person name="Goldman M.H.S."/>
            <person name="Gomes S.L."/>
            <person name="Gruber A."/>
            <person name="Ho P.L."/>
            <person name="Hoheisel J.D."/>
            <person name="Junqueira M.L."/>
            <person name="Kemper E.L."/>
            <person name="Kitajima J.P."/>
            <person name="Krieger J.E."/>
            <person name="Kuramae E.E."/>
            <person name="Laigret F."/>
            <person name="Lambais M.R."/>
            <person name="Leite L.C.C."/>
            <person name="Lemos E.G.M."/>
            <person name="Lemos M.V.F."/>
            <person name="Lopes S.A."/>
            <person name="Lopes C.R."/>
            <person name="Machado J.A."/>
            <person name="Machado M.A."/>
            <person name="Madeira A.M.B.N."/>
            <person name="Madeira H.M.F."/>
            <person name="Marino C.L."/>
            <person name="Marques M.V."/>
            <person name="Martins E.A.L."/>
            <person name="Martins E.M.F."/>
            <person name="Matsukuma A.Y."/>
            <person name="Menck C.F.M."/>
            <person name="Miracca E.C."/>
            <person name="Miyaki C.Y."/>
            <person name="Monteiro-Vitorello C.B."/>
            <person name="Moon D.H."/>
            <person name="Nagai M.A."/>
            <person name="Nascimento A.L.T.O."/>
            <person name="Netto L.E.S."/>
            <person name="Nhani A. Jr."/>
            <person name="Nobrega F.G."/>
            <person name="Nunes L.R."/>
            <person name="Oliveira M.A."/>
            <person name="de Oliveira M.C."/>
            <person name="de Oliveira R.C."/>
            <person name="Palmieri D.A."/>
            <person name="Paris A."/>
            <person name="Peixoto B.R."/>
            <person name="Pereira G.A.G."/>
            <person name="Pereira H.A. Jr."/>
            <person name="Pesquero J.B."/>
            <person name="Quaggio R.B."/>
            <person name="Roberto P.G."/>
            <person name="Rodrigues V."/>
            <person name="de Rosa A.J.M."/>
            <person name="de Rosa V.E. Jr."/>
            <person name="de Sa R.G."/>
            <person name="Santelli R.V."/>
            <person name="Sawasaki H.E."/>
            <person name="da Silva A.C.R."/>
            <person name="da Silva A.M."/>
            <person name="da Silva F.R."/>
            <person name="Silva W.A. Jr."/>
            <person name="da Silveira J.F."/>
            <person name="Silvestri M.L.Z."/>
            <person name="Siqueira W.J."/>
            <person name="de Souza A.A."/>
            <person name="de Souza A.P."/>
            <person name="Terenzi M.F."/>
            <person name="Truffi D."/>
            <person name="Tsai S.M."/>
            <person name="Tsuhako M.H."/>
            <person name="Vallada H."/>
            <person name="Van Sluys M.A."/>
            <person name="Verjovski-Almeida S."/>
            <person name="Vettore A.L."/>
            <person name="Zago M.A."/>
            <person name="Zatz M."/>
            <person name="Meidanis J."/>
            <person name="Setubal J.C."/>
        </authorList>
    </citation>
    <scope>NUCLEOTIDE SEQUENCE [LARGE SCALE GENOMIC DNA]</scope>
    <source>
        <strain>9a5c</strain>
    </source>
</reference>
<accession>Q9PEH0</accession>
<sequence>MRYPMSKLAYHRVLLKLSGEALMGSADYGIDPKVINRLAGEVIEAQNAGAELALVIGGGNIFRGAGLAAKGMDRVTGDHMGMLATIINALAMQDALEKLGTKVRVMSAIKINNVCEDFIRRRAIRHLEKSRITIFAAGTGNPFFTTDSGAALRAIEIGADLLLKATKVDGIYNKDPQKHCDAVKYSTLSYDEVISQNLEVMDTAAFALARDSNLPLRIFDIEQPGVLLRILHGEEIGTLVKERNSKS</sequence>
<dbReference type="EC" id="2.7.4.22" evidence="1"/>
<dbReference type="EMBL" id="AE003849">
    <property type="protein sequence ID" value="AAF83868.1"/>
    <property type="molecule type" value="Genomic_DNA"/>
</dbReference>
<dbReference type="PIR" id="B82730">
    <property type="entry name" value="B82730"/>
</dbReference>
<dbReference type="SMR" id="Q9PEH0"/>
<dbReference type="STRING" id="160492.XF_1058"/>
<dbReference type="KEGG" id="xfa:XF_1058"/>
<dbReference type="eggNOG" id="COG0528">
    <property type="taxonomic scope" value="Bacteria"/>
</dbReference>
<dbReference type="HOGENOM" id="CLU_033861_0_0_6"/>
<dbReference type="UniPathway" id="UPA00159">
    <property type="reaction ID" value="UER00275"/>
</dbReference>
<dbReference type="Proteomes" id="UP000000812">
    <property type="component" value="Chromosome"/>
</dbReference>
<dbReference type="GO" id="GO:0005829">
    <property type="term" value="C:cytosol"/>
    <property type="evidence" value="ECO:0007669"/>
    <property type="project" value="TreeGrafter"/>
</dbReference>
<dbReference type="GO" id="GO:0005524">
    <property type="term" value="F:ATP binding"/>
    <property type="evidence" value="ECO:0007669"/>
    <property type="project" value="UniProtKB-KW"/>
</dbReference>
<dbReference type="GO" id="GO:0033862">
    <property type="term" value="F:UMP kinase activity"/>
    <property type="evidence" value="ECO:0007669"/>
    <property type="project" value="UniProtKB-EC"/>
</dbReference>
<dbReference type="GO" id="GO:0044210">
    <property type="term" value="P:'de novo' CTP biosynthetic process"/>
    <property type="evidence" value="ECO:0007669"/>
    <property type="project" value="UniProtKB-UniRule"/>
</dbReference>
<dbReference type="GO" id="GO:0006225">
    <property type="term" value="P:UDP biosynthetic process"/>
    <property type="evidence" value="ECO:0007669"/>
    <property type="project" value="TreeGrafter"/>
</dbReference>
<dbReference type="CDD" id="cd04254">
    <property type="entry name" value="AAK_UMPK-PyrH-Ec"/>
    <property type="match status" value="1"/>
</dbReference>
<dbReference type="FunFam" id="3.40.1160.10:FF:000001">
    <property type="entry name" value="Uridylate kinase"/>
    <property type="match status" value="1"/>
</dbReference>
<dbReference type="Gene3D" id="3.40.1160.10">
    <property type="entry name" value="Acetylglutamate kinase-like"/>
    <property type="match status" value="1"/>
</dbReference>
<dbReference type="HAMAP" id="MF_01220_B">
    <property type="entry name" value="PyrH_B"/>
    <property type="match status" value="1"/>
</dbReference>
<dbReference type="InterPro" id="IPR036393">
    <property type="entry name" value="AceGlu_kinase-like_sf"/>
</dbReference>
<dbReference type="InterPro" id="IPR001048">
    <property type="entry name" value="Asp/Glu/Uridylate_kinase"/>
</dbReference>
<dbReference type="InterPro" id="IPR011817">
    <property type="entry name" value="Uridylate_kinase"/>
</dbReference>
<dbReference type="InterPro" id="IPR015963">
    <property type="entry name" value="Uridylate_kinase_bac"/>
</dbReference>
<dbReference type="NCBIfam" id="TIGR02075">
    <property type="entry name" value="pyrH_bact"/>
    <property type="match status" value="1"/>
</dbReference>
<dbReference type="PANTHER" id="PTHR42833">
    <property type="entry name" value="URIDYLATE KINASE"/>
    <property type="match status" value="1"/>
</dbReference>
<dbReference type="PANTHER" id="PTHR42833:SF4">
    <property type="entry name" value="URIDYLATE KINASE PUMPKIN, CHLOROPLASTIC"/>
    <property type="match status" value="1"/>
</dbReference>
<dbReference type="Pfam" id="PF00696">
    <property type="entry name" value="AA_kinase"/>
    <property type="match status" value="1"/>
</dbReference>
<dbReference type="PIRSF" id="PIRSF005650">
    <property type="entry name" value="Uridylate_kin"/>
    <property type="match status" value="1"/>
</dbReference>
<dbReference type="SUPFAM" id="SSF53633">
    <property type="entry name" value="Carbamate kinase-like"/>
    <property type="match status" value="1"/>
</dbReference>
<name>PYRH_XYLFA</name>
<proteinExistence type="inferred from homology"/>
<keyword id="KW-0067">ATP-binding</keyword>
<keyword id="KW-0963">Cytoplasm</keyword>
<keyword id="KW-0418">Kinase</keyword>
<keyword id="KW-0547">Nucleotide-binding</keyword>
<keyword id="KW-0665">Pyrimidine biosynthesis</keyword>
<keyword id="KW-0808">Transferase</keyword>
<comment type="function">
    <text evidence="1">Catalyzes the reversible phosphorylation of UMP to UDP.</text>
</comment>
<comment type="catalytic activity">
    <reaction evidence="1">
        <text>UMP + ATP = UDP + ADP</text>
        <dbReference type="Rhea" id="RHEA:24400"/>
        <dbReference type="ChEBI" id="CHEBI:30616"/>
        <dbReference type="ChEBI" id="CHEBI:57865"/>
        <dbReference type="ChEBI" id="CHEBI:58223"/>
        <dbReference type="ChEBI" id="CHEBI:456216"/>
        <dbReference type="EC" id="2.7.4.22"/>
    </reaction>
</comment>
<comment type="activity regulation">
    <text evidence="1">Inhibited by UTP.</text>
</comment>
<comment type="pathway">
    <text evidence="1">Pyrimidine metabolism; CTP biosynthesis via de novo pathway; UDP from UMP (UMPK route): step 1/1.</text>
</comment>
<comment type="subunit">
    <text evidence="1">Homohexamer.</text>
</comment>
<comment type="subcellular location">
    <subcellularLocation>
        <location evidence="1">Cytoplasm</location>
    </subcellularLocation>
</comment>
<comment type="similarity">
    <text evidence="1">Belongs to the UMP kinase family.</text>
</comment>